<evidence type="ECO:0000269" key="1">
    <source>
    </source>
</evidence>
<evidence type="ECO:0000303" key="2">
    <source>
    </source>
</evidence>
<evidence type="ECO:0000312" key="3">
    <source>
        <dbReference type="Araport" id="AT2G28625"/>
    </source>
</evidence>
<evidence type="ECO:0000312" key="4">
    <source>
        <dbReference type="EMBL" id="AC007171"/>
    </source>
</evidence>
<sequence>MNEEERVGSSSSSSSSLPVSYGVDCEKYDFSSSVSSLSQPFSPEGSSNKSHVLENNLSFVFSLDHNSNSSLMFPRDRPCSCLHHVFEWILQRCCGCLC</sequence>
<reference key="1">
    <citation type="journal article" date="1999" name="Nature">
        <title>Sequence and analysis of chromosome 2 of the plant Arabidopsis thaliana.</title>
        <authorList>
            <person name="Lin X."/>
            <person name="Kaul S."/>
            <person name="Rounsley S.D."/>
            <person name="Shea T.P."/>
            <person name="Benito M.-I."/>
            <person name="Town C.D."/>
            <person name="Fujii C.Y."/>
            <person name="Mason T.M."/>
            <person name="Bowman C.L."/>
            <person name="Barnstead M.E."/>
            <person name="Feldblyum T.V."/>
            <person name="Buell C.R."/>
            <person name="Ketchum K.A."/>
            <person name="Lee J.J."/>
            <person name="Ronning C.M."/>
            <person name="Koo H.L."/>
            <person name="Moffat K.S."/>
            <person name="Cronin L.A."/>
            <person name="Shen M."/>
            <person name="Pai G."/>
            <person name="Van Aken S."/>
            <person name="Umayam L."/>
            <person name="Tallon L.J."/>
            <person name="Gill J.E."/>
            <person name="Adams M.D."/>
            <person name="Carrera A.J."/>
            <person name="Creasy T.H."/>
            <person name="Goodman H.M."/>
            <person name="Somerville C.R."/>
            <person name="Copenhaver G.P."/>
            <person name="Preuss D."/>
            <person name="Nierman W.C."/>
            <person name="White O."/>
            <person name="Eisen J.A."/>
            <person name="Salzberg S.L."/>
            <person name="Fraser C.M."/>
            <person name="Venter J.C."/>
        </authorList>
    </citation>
    <scope>NUCLEOTIDE SEQUENCE [LARGE SCALE GENOMIC DNA]</scope>
    <source>
        <strain>cv. Columbia</strain>
    </source>
</reference>
<reference key="2">
    <citation type="journal article" date="2017" name="Plant J.">
        <title>Araport11: a complete reannotation of the Arabidopsis thaliana reference genome.</title>
        <authorList>
            <person name="Cheng C.Y."/>
            <person name="Krishnakumar V."/>
            <person name="Chan A.P."/>
            <person name="Thibaud-Nissen F."/>
            <person name="Schobel S."/>
            <person name="Town C.D."/>
        </authorList>
    </citation>
    <scope>GENOME REANNOTATION</scope>
    <source>
        <strain>cv. Columbia</strain>
    </source>
</reference>
<reference key="3">
    <citation type="journal article" date="2002" name="Plant Physiol.">
        <title>Cloning and sequencing of cDNAs for hypothetical genes from chromosome 2 of Arabidopsis.</title>
        <authorList>
            <person name="Xiao Y.-L."/>
            <person name="Malik M."/>
            <person name="Whitelaw C.A."/>
            <person name="Town C.D."/>
        </authorList>
    </citation>
    <scope>NUCLEOTIDE SEQUENCE [LARGE SCALE MRNA]</scope>
    <source>
        <strain>cv. Columbia</strain>
    </source>
</reference>
<reference key="4">
    <citation type="journal article" date="2017" name="J. Exp. Bot.">
        <title>PCA22 acts as a suppressor of atrzf1 to mediate proline accumulation in response to abiotic stress in Arabidopsis.</title>
        <authorList>
            <person name="Kim A.-R."/>
            <person name="Min J.-H."/>
            <person name="Lee K.-H."/>
            <person name="Kim C.S."/>
        </authorList>
    </citation>
    <scope>FUNCTION</scope>
    <scope>DISRUPTION PHENOTYPE</scope>
    <scope>SUBCELLULAR LOCATION</scope>
    <scope>TISSUE SPECIFICITY</scope>
    <scope>REPRESSION BY ABIOTIC STRESSES</scope>
    <source>
        <strain>cv. Columbia</strain>
    </source>
</reference>
<protein>
    <recommendedName>
        <fullName evidence="2">Protein PROLINE CONTENT ALTERNATIVE 22</fullName>
    </recommendedName>
</protein>
<gene>
    <name evidence="2" type="primary">PCA22</name>
    <name evidence="3" type="ordered locus">At2g28625</name>
    <name evidence="4" type="ORF">T8O18</name>
</gene>
<keyword id="KW-0938">Abscisic acid signaling pathway</keyword>
<keyword id="KW-0963">Cytoplasm</keyword>
<keyword id="KW-1185">Reference proteome</keyword>
<keyword id="KW-0346">Stress response</keyword>
<feature type="chain" id="PRO_0000458645" description="Protein PROLINE CONTENT ALTERNATIVE 22">
    <location>
        <begin position="1"/>
        <end position="98"/>
    </location>
</feature>
<organism>
    <name type="scientific">Arabidopsis thaliana</name>
    <name type="common">Mouse-ear cress</name>
    <dbReference type="NCBI Taxonomy" id="3702"/>
    <lineage>
        <taxon>Eukaryota</taxon>
        <taxon>Viridiplantae</taxon>
        <taxon>Streptophyta</taxon>
        <taxon>Embryophyta</taxon>
        <taxon>Tracheophyta</taxon>
        <taxon>Spermatophyta</taxon>
        <taxon>Magnoliopsida</taxon>
        <taxon>eudicotyledons</taxon>
        <taxon>Gunneridae</taxon>
        <taxon>Pentapetalae</taxon>
        <taxon>rosids</taxon>
        <taxon>malvids</taxon>
        <taxon>Brassicales</taxon>
        <taxon>Brassicaceae</taxon>
        <taxon>Camelineae</taxon>
        <taxon>Arabidopsis</taxon>
    </lineage>
</organism>
<proteinExistence type="evidence at transcript level"/>
<dbReference type="EMBL" id="AC007171">
    <property type="status" value="NOT_ANNOTATED_CDS"/>
    <property type="molecule type" value="Genomic_DNA"/>
</dbReference>
<dbReference type="EMBL" id="CP002685">
    <property type="protein sequence ID" value="AEC08151.1"/>
    <property type="molecule type" value="Genomic_DNA"/>
</dbReference>
<dbReference type="EMBL" id="AY299288">
    <property type="status" value="NOT_ANNOTATED_CDS"/>
    <property type="molecule type" value="mRNA"/>
</dbReference>
<dbReference type="RefSeq" id="NP_973554.1">
    <property type="nucleotide sequence ID" value="NM_201825.1"/>
</dbReference>
<dbReference type="STRING" id="3702.F4IIS6"/>
<dbReference type="PaxDb" id="3702-AT2G28625.1"/>
<dbReference type="EnsemblPlants" id="AT2G28625.1">
    <property type="protein sequence ID" value="AT2G28625.1"/>
    <property type="gene ID" value="AT2G28625"/>
</dbReference>
<dbReference type="GeneID" id="2745569"/>
<dbReference type="Gramene" id="AT2G28625.1">
    <property type="protein sequence ID" value="AT2G28625.1"/>
    <property type="gene ID" value="AT2G28625"/>
</dbReference>
<dbReference type="KEGG" id="ath:AT2G28625"/>
<dbReference type="Araport" id="AT2G28625"/>
<dbReference type="TAIR" id="AT2G28625">
    <property type="gene designation" value="PCA22"/>
</dbReference>
<dbReference type="eggNOG" id="ENOG502S5BD">
    <property type="taxonomic scope" value="Eukaryota"/>
</dbReference>
<dbReference type="HOGENOM" id="CLU_2515826_0_0_1"/>
<dbReference type="InParanoid" id="F4IIS6"/>
<dbReference type="OMA" id="IERCCNC"/>
<dbReference type="PRO" id="PR:F4IIS6"/>
<dbReference type="Proteomes" id="UP000006548">
    <property type="component" value="Chromosome 2"/>
</dbReference>
<dbReference type="ExpressionAtlas" id="F4IIS6">
    <property type="expression patterns" value="baseline and differential"/>
</dbReference>
<dbReference type="GO" id="GO:0005737">
    <property type="term" value="C:cytoplasm"/>
    <property type="evidence" value="ECO:0000314"/>
    <property type="project" value="TAIR"/>
</dbReference>
<dbReference type="GO" id="GO:0009738">
    <property type="term" value="P:abscisic acid-activated signaling pathway"/>
    <property type="evidence" value="ECO:0007669"/>
    <property type="project" value="UniProtKB-KW"/>
</dbReference>
<dbReference type="GO" id="GO:0071215">
    <property type="term" value="P:cellular response to abscisic acid stimulus"/>
    <property type="evidence" value="ECO:0000316"/>
    <property type="project" value="TAIR"/>
</dbReference>
<dbReference type="GO" id="GO:0080092">
    <property type="term" value="P:regulation of pollen tube growth"/>
    <property type="evidence" value="ECO:0000316"/>
    <property type="project" value="TAIR"/>
</dbReference>
<dbReference type="GO" id="GO:2000214">
    <property type="term" value="P:regulation of proline metabolic process"/>
    <property type="evidence" value="ECO:0000316"/>
    <property type="project" value="TAIR"/>
</dbReference>
<dbReference type="GO" id="GO:0009414">
    <property type="term" value="P:response to water deprivation"/>
    <property type="evidence" value="ECO:0000316"/>
    <property type="project" value="TAIR"/>
</dbReference>
<name>PCA22_ARATH</name>
<accession>F4IIS6</accession>
<comment type="function">
    <text evidence="1">Acts as an opponent to RZF1 during early seedling growth in term of proline accumulation in response to dehydration and abscisic acid (ABA) (PubMed:28369480). Confers sensitivity to abiotic stresses such as ABA, drought and osmotic stress (e.g. mannitol treatment) by preventing proline accumulation and by reducing the expression of dehydration-inducible genes (PubMed:28369480). Promotes the production of lipid peroxidation by drought stress thus leading to malondialdehyde (MDA) synthesis (PubMed:28369480). Prevents pollen tube elongation (PubMed:28369480). Necessary for RZF1 expression in seedlings (PubMed:28369480).</text>
</comment>
<comment type="subcellular location">
    <subcellularLocation>
        <location evidence="1">Cytoplasm</location>
    </subcellularLocation>
</comment>
<comment type="tissue specificity">
    <text evidence="1">Mainly expressed in flowers, to a lower extent, in roots and, at very low levels, in leaves and stems.</text>
</comment>
<comment type="induction">
    <text evidence="1">Reduced levels in seedlings exposed to abiotic stresses such as mannitol, drought, polyethylene glycol (PEG) and abscisic acid (ABA) treatments.</text>
</comment>
<comment type="disruption phenotype">
    <text evidence="1">Reduced sensitivity to abiotic stresses including dehydration and abscisic acid (ABA) treatment (PubMed:28369480). Slightly enhanced pollen tube growth (PubMed:28369480).</text>
</comment>